<evidence type="ECO:0000250" key="1"/>
<evidence type="ECO:0000255" key="2"/>
<evidence type="ECO:0000255" key="3">
    <source>
        <dbReference type="PROSITE-ProRule" id="PRU00250"/>
    </source>
</evidence>
<evidence type="ECO:0000256" key="4">
    <source>
        <dbReference type="SAM" id="MobiDB-lite"/>
    </source>
</evidence>
<sequence>MFKQLSQFGKNITDELAKGINEDTASEGQHGAGAQGGRREEGGSPYEELPKEIQAKLRKFEKYEQKYPLLLNAYKAEKEKSDEVELLLKVLSENTPVSAIGDVETLRGFFEDVGVKTAMLTEEIKRITGENNGLQKQLAEAQESLEQRQRDLTSREEELAKSSREATELRELRQQAVAEKDAAVTERDDAQKAAAEMETRCTEAEAHAAEMKSQIESMETELKRTEKLLTTYKSTIQELGASQATGEAQPSSEAPSVRGKKGKGKRGKGKKRVQAADEKADTSSELELGEEKTPSTSSAGDEIIEAIETKQKYENLVEEHQQLSLELEKSRHWEQECLDSRKKVETLETELKDVKAKLKNSNEELETVRGMLKTVGNELVHARDELKQLNCEGTNEVERLKSELQELRTENSTQIATLKEQLQLLNDQKKALETDVEQHKRKMEDLESELLKSQENVSKFRNQNNDLSEKLRDYIVLKKSEATTRMSLSQKEKTIEYLEEQVRQYNSKEIEDKKAFADSKTELERWQRTAANLEKQLERIRLETKRHDDNLESYIKENGKLSERLEVLQEKYDSLQNLKSNSGDQVSAIRKQCEELNSKLKEATKRVMSLEDELNETSTVLQERTREATTMRRMINSDRSSKDTKIRELEDRVAAASEERDKLKSELDVLLARKNHETQDLKNTNQELVVKINALELKEQELATEVQQLKVLNQTIRRHSSTAADGSEELELTVRKLKDSLRTSEKKMRELKDSNEELKSLNDELNAKLDRLANRYKVLSTQLKMSKDMSSQSRHSSRSGSLVSPSSDNETGNSPRKISISSAHPAPVVASYDNSAEMESNEKLAYIRNVLLGFLEHREQRSQLLPVVSTLLQLSSHDEKRLLTSLK</sequence>
<comment type="function">
    <text evidence="1">Involved in vesicular transport between an endosomal compartment and the Golgi apparatus.</text>
</comment>
<comment type="subcellular location">
    <subcellularLocation>
        <location>Cytoplasm</location>
    </subcellularLocation>
    <subcellularLocation>
        <location evidence="1">Golgi apparatus membrane</location>
        <topology evidence="1">Peripheral membrane protein</topology>
    </subcellularLocation>
</comment>
<comment type="domain">
    <text>The GRIP domain may serve as a Golgi targeting domain.</text>
</comment>
<dbReference type="EMBL" id="AE016817">
    <property type="protein sequence ID" value="AAS51883.2"/>
    <property type="molecule type" value="Genomic_DNA"/>
</dbReference>
<dbReference type="RefSeq" id="NP_984059.2">
    <property type="nucleotide sequence ID" value="NM_209412.2"/>
</dbReference>
<dbReference type="SMR" id="Q75AF5"/>
<dbReference type="FunCoup" id="Q75AF5">
    <property type="interactions" value="145"/>
</dbReference>
<dbReference type="STRING" id="284811.Q75AF5"/>
<dbReference type="EnsemblFungi" id="AAS51883">
    <property type="protein sequence ID" value="AAS51883"/>
    <property type="gene ID" value="AGOS_ADL037W"/>
</dbReference>
<dbReference type="GeneID" id="4620207"/>
<dbReference type="KEGG" id="ago:AGOS_ADL037W"/>
<dbReference type="eggNOG" id="ENOG502S0A5">
    <property type="taxonomic scope" value="Eukaryota"/>
</dbReference>
<dbReference type="HOGENOM" id="CLU_006987_0_0_1"/>
<dbReference type="InParanoid" id="Q75AF5"/>
<dbReference type="OMA" id="GPNTNRM"/>
<dbReference type="OrthoDB" id="1926336at2759"/>
<dbReference type="Proteomes" id="UP000000591">
    <property type="component" value="Chromosome IV"/>
</dbReference>
<dbReference type="GO" id="GO:0005829">
    <property type="term" value="C:cytosol"/>
    <property type="evidence" value="ECO:0007669"/>
    <property type="project" value="EnsemblFungi"/>
</dbReference>
<dbReference type="GO" id="GO:0000139">
    <property type="term" value="C:Golgi membrane"/>
    <property type="evidence" value="ECO:0007669"/>
    <property type="project" value="UniProtKB-SubCell"/>
</dbReference>
<dbReference type="GO" id="GO:0043001">
    <property type="term" value="P:Golgi to plasma membrane protein transport"/>
    <property type="evidence" value="ECO:0007669"/>
    <property type="project" value="EnsemblFungi"/>
</dbReference>
<dbReference type="GO" id="GO:0034976">
    <property type="term" value="P:response to endoplasmic reticulum stress"/>
    <property type="evidence" value="ECO:0007669"/>
    <property type="project" value="EnsemblFungi"/>
</dbReference>
<dbReference type="Gene3D" id="1.10.287.1490">
    <property type="match status" value="1"/>
</dbReference>
<dbReference type="InterPro" id="IPR051952">
    <property type="entry name" value="Golgi-autophagy_related"/>
</dbReference>
<dbReference type="InterPro" id="IPR000237">
    <property type="entry name" value="GRIP_dom"/>
</dbReference>
<dbReference type="PANTHER" id="PTHR23157">
    <property type="entry name" value="GRIP AND COILED-COIL DOMAIN-CONTAINING PROTEIN 1"/>
    <property type="match status" value="1"/>
</dbReference>
<dbReference type="PANTHER" id="PTHR23157:SF25">
    <property type="entry name" value="GRIP AND COILED-COIL DOMAIN-CONTAINING PROTEIN 1"/>
    <property type="match status" value="1"/>
</dbReference>
<dbReference type="Pfam" id="PF01465">
    <property type="entry name" value="GRIP"/>
    <property type="match status" value="1"/>
</dbReference>
<dbReference type="SMART" id="SM00755">
    <property type="entry name" value="Grip"/>
    <property type="match status" value="1"/>
</dbReference>
<dbReference type="SUPFAM" id="SSF57997">
    <property type="entry name" value="Tropomyosin"/>
    <property type="match status" value="1"/>
</dbReference>
<dbReference type="PROSITE" id="PS50913">
    <property type="entry name" value="GRIP"/>
    <property type="match status" value="1"/>
</dbReference>
<keyword id="KW-0175">Coiled coil</keyword>
<keyword id="KW-0963">Cytoplasm</keyword>
<keyword id="KW-0333">Golgi apparatus</keyword>
<keyword id="KW-0472">Membrane</keyword>
<keyword id="KW-0653">Protein transport</keyword>
<keyword id="KW-1185">Reference proteome</keyword>
<keyword id="KW-0813">Transport</keyword>
<feature type="chain" id="PRO_0000240371" description="Golgin IMH1">
    <location>
        <begin position="1"/>
        <end position="887"/>
    </location>
</feature>
<feature type="domain" description="GRIP" evidence="3">
    <location>
        <begin position="837"/>
        <end position="885"/>
    </location>
</feature>
<feature type="region of interest" description="Disordered" evidence="4">
    <location>
        <begin position="16"/>
        <end position="50"/>
    </location>
</feature>
<feature type="region of interest" description="Disordered" evidence="4">
    <location>
        <begin position="142"/>
        <end position="214"/>
    </location>
</feature>
<feature type="region of interest" description="Disordered" evidence="4">
    <location>
        <begin position="240"/>
        <end position="301"/>
    </location>
</feature>
<feature type="region of interest" description="Disordered" evidence="4">
    <location>
        <begin position="783"/>
        <end position="822"/>
    </location>
</feature>
<feature type="coiled-coil region" evidence="2">
    <location>
        <begin position="118"/>
        <end position="241"/>
    </location>
</feature>
<feature type="coiled-coil region" evidence="2">
    <location>
        <begin position="299"/>
        <end position="788"/>
    </location>
</feature>
<feature type="compositionally biased region" description="Basic and acidic residues" evidence="4">
    <location>
        <begin position="37"/>
        <end position="50"/>
    </location>
</feature>
<feature type="compositionally biased region" description="Basic and acidic residues" evidence="4">
    <location>
        <begin position="145"/>
        <end position="210"/>
    </location>
</feature>
<feature type="compositionally biased region" description="Polar residues" evidence="4">
    <location>
        <begin position="240"/>
        <end position="254"/>
    </location>
</feature>
<feature type="compositionally biased region" description="Basic residues" evidence="4">
    <location>
        <begin position="258"/>
        <end position="273"/>
    </location>
</feature>
<feature type="compositionally biased region" description="Low complexity" evidence="4">
    <location>
        <begin position="788"/>
        <end position="807"/>
    </location>
</feature>
<feature type="compositionally biased region" description="Polar residues" evidence="4">
    <location>
        <begin position="808"/>
        <end position="822"/>
    </location>
</feature>
<accession>Q75AF5</accession>
<reference key="1">
    <citation type="journal article" date="2004" name="Science">
        <title>The Ashbya gossypii genome as a tool for mapping the ancient Saccharomyces cerevisiae genome.</title>
        <authorList>
            <person name="Dietrich F.S."/>
            <person name="Voegeli S."/>
            <person name="Brachat S."/>
            <person name="Lerch A."/>
            <person name="Gates K."/>
            <person name="Steiner S."/>
            <person name="Mohr C."/>
            <person name="Poehlmann R."/>
            <person name="Luedi P."/>
            <person name="Choi S."/>
            <person name="Wing R.A."/>
            <person name="Flavier A."/>
            <person name="Gaffney T.D."/>
            <person name="Philippsen P."/>
        </authorList>
    </citation>
    <scope>NUCLEOTIDE SEQUENCE [LARGE SCALE GENOMIC DNA]</scope>
    <source>
        <strain>ATCC 10895 / CBS 109.51 / FGSC 9923 / NRRL Y-1056</strain>
    </source>
</reference>
<reference key="2">
    <citation type="journal article" date="2013" name="G3 (Bethesda)">
        <title>Genomes of Ashbya fungi isolated from insects reveal four mating-type loci, numerous translocations, lack of transposons, and distinct gene duplications.</title>
        <authorList>
            <person name="Dietrich F.S."/>
            <person name="Voegeli S."/>
            <person name="Kuo S."/>
            <person name="Philippsen P."/>
        </authorList>
    </citation>
    <scope>GENOME REANNOTATION</scope>
    <scope>SEQUENCE REVISION TO 356</scope>
    <source>
        <strain>ATCC 10895 / CBS 109.51 / FGSC 9923 / NRRL Y-1056</strain>
    </source>
</reference>
<gene>
    <name type="primary">IMH1</name>
    <name type="ordered locus">ADL037W</name>
</gene>
<name>IMH1_EREGS</name>
<protein>
    <recommendedName>
        <fullName>Golgin IMH1</fullName>
    </recommendedName>
</protein>
<proteinExistence type="inferred from homology"/>
<organism>
    <name type="scientific">Eremothecium gossypii (strain ATCC 10895 / CBS 109.51 / FGSC 9923 / NRRL Y-1056)</name>
    <name type="common">Yeast</name>
    <name type="synonym">Ashbya gossypii</name>
    <dbReference type="NCBI Taxonomy" id="284811"/>
    <lineage>
        <taxon>Eukaryota</taxon>
        <taxon>Fungi</taxon>
        <taxon>Dikarya</taxon>
        <taxon>Ascomycota</taxon>
        <taxon>Saccharomycotina</taxon>
        <taxon>Saccharomycetes</taxon>
        <taxon>Saccharomycetales</taxon>
        <taxon>Saccharomycetaceae</taxon>
        <taxon>Eremothecium</taxon>
    </lineage>
</organism>